<sequence>MATIVRQNGLTPIQETNEVKSFLKERGIDYDHWKVPHNASNLTDKEVLVDTEKEELLKKLDDRFETLKAKEGYQSRDLIVLHPNVSGLNEMLAKFDKVHYHTDEEVRYIVDGSGVFGFAFKDEKFLVHVYKDDFISVPRNTNHWFYLDDKKRIKAVRYFQDMSGWVPNYVEETNSLD</sequence>
<dbReference type="EC" id="1.13.11.54" evidence="1"/>
<dbReference type="EC" id="1.13.11.53" evidence="1"/>
<dbReference type="EMBL" id="AE010301">
    <property type="protein sequence ID" value="AAN51852.1"/>
    <property type="molecule type" value="Genomic_DNA"/>
</dbReference>
<dbReference type="RefSeq" id="NP_714837.1">
    <property type="nucleotide sequence ID" value="NC_004343.2"/>
</dbReference>
<dbReference type="RefSeq" id="WP_000201440.1">
    <property type="nucleotide sequence ID" value="NC_004343.2"/>
</dbReference>
<dbReference type="SMR" id="Q8EXC0"/>
<dbReference type="STRING" id="189518.LB_293"/>
<dbReference type="PaxDb" id="189518-LB_293"/>
<dbReference type="EnsemblBacteria" id="AAN51852">
    <property type="protein sequence ID" value="AAN51852"/>
    <property type="gene ID" value="LB_293"/>
</dbReference>
<dbReference type="KEGG" id="lil:LB_293"/>
<dbReference type="PATRIC" id="fig|189518.3.peg.4616"/>
<dbReference type="HOGENOM" id="CLU_125400_0_0_12"/>
<dbReference type="InParanoid" id="Q8EXC0"/>
<dbReference type="OrthoDB" id="9795636at2"/>
<dbReference type="UniPathway" id="UPA00904">
    <property type="reaction ID" value="UER00878"/>
</dbReference>
<dbReference type="Proteomes" id="UP000001408">
    <property type="component" value="Chromosome II"/>
</dbReference>
<dbReference type="GO" id="GO:0010308">
    <property type="term" value="F:acireductone dioxygenase (Ni2+-requiring) activity"/>
    <property type="evidence" value="ECO:0007669"/>
    <property type="project" value="UniProtKB-UniRule"/>
</dbReference>
<dbReference type="GO" id="GO:0010309">
    <property type="term" value="F:acireductone dioxygenase [iron(II)-requiring] activity"/>
    <property type="evidence" value="ECO:0000318"/>
    <property type="project" value="GO_Central"/>
</dbReference>
<dbReference type="GO" id="GO:0005506">
    <property type="term" value="F:iron ion binding"/>
    <property type="evidence" value="ECO:0007669"/>
    <property type="project" value="UniProtKB-UniRule"/>
</dbReference>
<dbReference type="GO" id="GO:0016151">
    <property type="term" value="F:nickel cation binding"/>
    <property type="evidence" value="ECO:0007669"/>
    <property type="project" value="UniProtKB-UniRule"/>
</dbReference>
<dbReference type="GO" id="GO:0019509">
    <property type="term" value="P:L-methionine salvage from methylthioadenosine"/>
    <property type="evidence" value="ECO:0007669"/>
    <property type="project" value="UniProtKB-UniRule"/>
</dbReference>
<dbReference type="GO" id="GO:0019284">
    <property type="term" value="P:L-methionine salvage from S-adenosylmethionine"/>
    <property type="evidence" value="ECO:0007669"/>
    <property type="project" value="InterPro"/>
</dbReference>
<dbReference type="GO" id="GO:0006555">
    <property type="term" value="P:methionine metabolic process"/>
    <property type="evidence" value="ECO:0000318"/>
    <property type="project" value="GO_Central"/>
</dbReference>
<dbReference type="CDD" id="cd02232">
    <property type="entry name" value="cupin_ARD"/>
    <property type="match status" value="1"/>
</dbReference>
<dbReference type="Gene3D" id="2.60.120.10">
    <property type="entry name" value="Jelly Rolls"/>
    <property type="match status" value="1"/>
</dbReference>
<dbReference type="HAMAP" id="MF_01682">
    <property type="entry name" value="Salvage_MtnD"/>
    <property type="match status" value="1"/>
</dbReference>
<dbReference type="InterPro" id="IPR004313">
    <property type="entry name" value="ARD"/>
</dbReference>
<dbReference type="InterPro" id="IPR023956">
    <property type="entry name" value="ARD_bac"/>
</dbReference>
<dbReference type="InterPro" id="IPR014710">
    <property type="entry name" value="RmlC-like_jellyroll"/>
</dbReference>
<dbReference type="InterPro" id="IPR011051">
    <property type="entry name" value="RmlC_Cupin_sf"/>
</dbReference>
<dbReference type="PANTHER" id="PTHR23418">
    <property type="entry name" value="ACIREDUCTONE DIOXYGENASE"/>
    <property type="match status" value="1"/>
</dbReference>
<dbReference type="PANTHER" id="PTHR23418:SF0">
    <property type="entry name" value="ACIREDUCTONE DIOXYGENASE"/>
    <property type="match status" value="1"/>
</dbReference>
<dbReference type="Pfam" id="PF03079">
    <property type="entry name" value="ARD"/>
    <property type="match status" value="1"/>
</dbReference>
<dbReference type="SUPFAM" id="SSF51182">
    <property type="entry name" value="RmlC-like cupins"/>
    <property type="match status" value="1"/>
</dbReference>
<accession>Q8EXC0</accession>
<name>MTND_LEPIN</name>
<protein>
    <recommendedName>
        <fullName evidence="1">Acireductone dioxygenase</fullName>
    </recommendedName>
    <alternativeName>
        <fullName evidence="1">1,2-dihydroxy-3-keto-5-methylthiopentene dioxygenase</fullName>
        <shortName evidence="1">DHK-MTPene dioxygenase</shortName>
    </alternativeName>
    <alternativeName>
        <fullName evidence="1">Acireductone dioxygenase (Fe(2+)-requiring)</fullName>
        <shortName evidence="1">ARD'</shortName>
        <shortName evidence="1">Fe-ARD</shortName>
        <ecNumber evidence="1">1.13.11.54</ecNumber>
    </alternativeName>
    <alternativeName>
        <fullName evidence="1">Acireductone dioxygenase (Ni(2+)-requiring)</fullName>
        <shortName evidence="1">ARD</shortName>
        <shortName evidence="1">Ni-ARD</shortName>
        <ecNumber evidence="1">1.13.11.53</ecNumber>
    </alternativeName>
</protein>
<feature type="chain" id="PRO_0000359206" description="Acireductone dioxygenase">
    <location>
        <begin position="1"/>
        <end position="177"/>
    </location>
</feature>
<feature type="binding site" evidence="1">
    <location>
        <position position="99"/>
    </location>
    <ligand>
        <name>Fe(2+)</name>
        <dbReference type="ChEBI" id="CHEBI:29033"/>
    </ligand>
</feature>
<feature type="binding site" evidence="1">
    <location>
        <position position="99"/>
    </location>
    <ligand>
        <name>Ni(2+)</name>
        <dbReference type="ChEBI" id="CHEBI:49786"/>
    </ligand>
</feature>
<feature type="binding site" evidence="1">
    <location>
        <position position="101"/>
    </location>
    <ligand>
        <name>Fe(2+)</name>
        <dbReference type="ChEBI" id="CHEBI:29033"/>
    </ligand>
</feature>
<feature type="binding site" evidence="1">
    <location>
        <position position="101"/>
    </location>
    <ligand>
        <name>Ni(2+)</name>
        <dbReference type="ChEBI" id="CHEBI:49786"/>
    </ligand>
</feature>
<feature type="binding site" evidence="1">
    <location>
        <position position="105"/>
    </location>
    <ligand>
        <name>Fe(2+)</name>
        <dbReference type="ChEBI" id="CHEBI:29033"/>
    </ligand>
</feature>
<feature type="binding site" evidence="1">
    <location>
        <position position="105"/>
    </location>
    <ligand>
        <name>Ni(2+)</name>
        <dbReference type="ChEBI" id="CHEBI:49786"/>
    </ligand>
</feature>
<feature type="binding site" evidence="1">
    <location>
        <position position="143"/>
    </location>
    <ligand>
        <name>Fe(2+)</name>
        <dbReference type="ChEBI" id="CHEBI:29033"/>
    </ligand>
</feature>
<feature type="binding site" evidence="1">
    <location>
        <position position="143"/>
    </location>
    <ligand>
        <name>Ni(2+)</name>
        <dbReference type="ChEBI" id="CHEBI:49786"/>
    </ligand>
</feature>
<feature type="site" description="Important to generate the dianion" evidence="1">
    <location>
        <position position="107"/>
    </location>
</feature>
<organism>
    <name type="scientific">Leptospira interrogans serogroup Icterohaemorrhagiae serovar Lai (strain 56601)</name>
    <dbReference type="NCBI Taxonomy" id="189518"/>
    <lineage>
        <taxon>Bacteria</taxon>
        <taxon>Pseudomonadati</taxon>
        <taxon>Spirochaetota</taxon>
        <taxon>Spirochaetia</taxon>
        <taxon>Leptospirales</taxon>
        <taxon>Leptospiraceae</taxon>
        <taxon>Leptospira</taxon>
    </lineage>
</organism>
<reference key="1">
    <citation type="journal article" date="2003" name="Nature">
        <title>Unique physiological and pathogenic features of Leptospira interrogans revealed by whole-genome sequencing.</title>
        <authorList>
            <person name="Ren S.-X."/>
            <person name="Fu G."/>
            <person name="Jiang X.-G."/>
            <person name="Zeng R."/>
            <person name="Miao Y.-G."/>
            <person name="Xu H."/>
            <person name="Zhang Y.-X."/>
            <person name="Xiong H."/>
            <person name="Lu G."/>
            <person name="Lu L.-F."/>
            <person name="Jiang H.-Q."/>
            <person name="Jia J."/>
            <person name="Tu Y.-F."/>
            <person name="Jiang J.-X."/>
            <person name="Gu W.-Y."/>
            <person name="Zhang Y.-Q."/>
            <person name="Cai Z."/>
            <person name="Sheng H.-H."/>
            <person name="Yin H.-F."/>
            <person name="Zhang Y."/>
            <person name="Zhu G.-F."/>
            <person name="Wan M."/>
            <person name="Huang H.-L."/>
            <person name="Qian Z."/>
            <person name="Wang S.-Y."/>
            <person name="Ma W."/>
            <person name="Yao Z.-J."/>
            <person name="Shen Y."/>
            <person name="Qiang B.-Q."/>
            <person name="Xia Q.-C."/>
            <person name="Guo X.-K."/>
            <person name="Danchin A."/>
            <person name="Saint Girons I."/>
            <person name="Somerville R.L."/>
            <person name="Wen Y.-M."/>
            <person name="Shi M.-H."/>
            <person name="Chen Z."/>
            <person name="Xu J.-G."/>
            <person name="Zhao G.-P."/>
        </authorList>
    </citation>
    <scope>NUCLEOTIDE SEQUENCE [LARGE SCALE GENOMIC DNA]</scope>
    <source>
        <strain>56601</strain>
    </source>
</reference>
<comment type="function">
    <text evidence="1">Catalyzes 2 different reactions between oxygen and the acireductone 1,2-dihydroxy-3-keto-5-methylthiopentene (DHK-MTPene) depending upon the metal bound in the active site. Fe-containing acireductone dioxygenase (Fe-ARD) produces formate and 2-keto-4-methylthiobutyrate (KMTB), the alpha-ketoacid precursor of methionine in the methionine recycle pathway. Ni-containing acireductone dioxygenase (Ni-ARD) produces methylthiopropionate, carbon monoxide and formate, and does not lie on the methionine recycle pathway.</text>
</comment>
<comment type="catalytic activity">
    <reaction evidence="1">
        <text>1,2-dihydroxy-5-(methylsulfanyl)pent-1-en-3-one + O2 = 3-(methylsulfanyl)propanoate + CO + formate + 2 H(+)</text>
        <dbReference type="Rhea" id="RHEA:14161"/>
        <dbReference type="ChEBI" id="CHEBI:15378"/>
        <dbReference type="ChEBI" id="CHEBI:15379"/>
        <dbReference type="ChEBI" id="CHEBI:15740"/>
        <dbReference type="ChEBI" id="CHEBI:17245"/>
        <dbReference type="ChEBI" id="CHEBI:49016"/>
        <dbReference type="ChEBI" id="CHEBI:49252"/>
        <dbReference type="EC" id="1.13.11.53"/>
    </reaction>
</comment>
<comment type="catalytic activity">
    <reaction evidence="1">
        <text>1,2-dihydroxy-5-(methylsulfanyl)pent-1-en-3-one + O2 = 4-methylsulfanyl-2-oxobutanoate + formate + 2 H(+)</text>
        <dbReference type="Rhea" id="RHEA:24504"/>
        <dbReference type="ChEBI" id="CHEBI:15378"/>
        <dbReference type="ChEBI" id="CHEBI:15379"/>
        <dbReference type="ChEBI" id="CHEBI:15740"/>
        <dbReference type="ChEBI" id="CHEBI:16723"/>
        <dbReference type="ChEBI" id="CHEBI:49252"/>
        <dbReference type="EC" id="1.13.11.54"/>
    </reaction>
</comment>
<comment type="cofactor">
    <cofactor evidence="1">
        <name>Fe(2+)</name>
        <dbReference type="ChEBI" id="CHEBI:29033"/>
    </cofactor>
    <text evidence="1">Binds 1 Fe(2+) cation per monomer.</text>
</comment>
<comment type="cofactor">
    <cofactor evidence="1">
        <name>Ni(2+)</name>
        <dbReference type="ChEBI" id="CHEBI:49786"/>
    </cofactor>
    <text evidence="1">Binds 1 nickel ion per monomer.</text>
</comment>
<comment type="pathway">
    <text evidence="1">Amino-acid biosynthesis; L-methionine biosynthesis via salvage pathway; L-methionine from S-methyl-5-thio-alpha-D-ribose 1-phosphate: step 5/6.</text>
</comment>
<comment type="subunit">
    <text evidence="1">Monomer.</text>
</comment>
<comment type="similarity">
    <text evidence="1">Belongs to the acireductone dioxygenase (ARD) family.</text>
</comment>
<keyword id="KW-0028">Amino-acid biosynthesis</keyword>
<keyword id="KW-0223">Dioxygenase</keyword>
<keyword id="KW-0408">Iron</keyword>
<keyword id="KW-0479">Metal-binding</keyword>
<keyword id="KW-0486">Methionine biosynthesis</keyword>
<keyword id="KW-0533">Nickel</keyword>
<keyword id="KW-0560">Oxidoreductase</keyword>
<keyword id="KW-1185">Reference proteome</keyword>
<proteinExistence type="inferred from homology"/>
<gene>
    <name evidence="1" type="primary">mtnD</name>
    <name type="ordered locus">LB_293</name>
</gene>
<evidence type="ECO:0000255" key="1">
    <source>
        <dbReference type="HAMAP-Rule" id="MF_01682"/>
    </source>
</evidence>